<feature type="chain" id="PRO_0000222194" description="Capsid protein">
    <location>
        <begin position="1"/>
        <end position="254"/>
    </location>
</feature>
<feature type="short sequence motif" description="Bipartite nuclear localization signal" evidence="1">
    <location>
        <begin position="9"/>
        <end position="35"/>
    </location>
</feature>
<name>CAPSD_TYDVA</name>
<keyword id="KW-0167">Capsid protein</keyword>
<keyword id="KW-0238">DNA-binding</keyword>
<keyword id="KW-1048">Host nucleus</keyword>
<keyword id="KW-1140">T=1 icosahedral capsid protein</keyword>
<keyword id="KW-1163">Viral penetration into host nucleus</keyword>
<keyword id="KW-0946">Virion</keyword>
<keyword id="KW-1160">Virus entry into host cell</keyword>
<organism>
    <name type="scientific">Tobacco yellow dwarf virus (strain Australia)</name>
    <name type="common">TYDV</name>
    <dbReference type="NCBI Taxonomy" id="31599"/>
    <lineage>
        <taxon>Viruses</taxon>
        <taxon>Monodnaviria</taxon>
        <taxon>Shotokuvirae</taxon>
        <taxon>Cressdnaviricota</taxon>
        <taxon>Repensiviricetes</taxon>
        <taxon>Geplafuvirales</taxon>
        <taxon>Geminiviridae</taxon>
        <taxon>Mastrevirus</taxon>
        <taxon>Tobacco yellow dwarf virus</taxon>
    </lineage>
</organism>
<protein>
    <recommendedName>
        <fullName>Capsid protein</fullName>
    </recommendedName>
    <alternativeName>
        <fullName>Coat protein</fullName>
        <shortName>CP</shortName>
    </alternativeName>
</protein>
<reference key="1">
    <citation type="journal article" date="1992" name="Virology">
        <title>The nucleotide sequence of the infectious cloned DNA component of tobacco yellow dwarf virus reveals features of geminiviruses infecting monocotyledonous plants.</title>
        <authorList>
            <person name="Morris B.A.M."/>
            <person name="Richardson K.A."/>
            <person name="Haley A."/>
            <person name="Zhan X."/>
            <person name="Thomas J.E."/>
        </authorList>
    </citation>
    <scope>NUCLEOTIDE SEQUENCE [GENOMIC DNA]</scope>
</reference>
<gene>
    <name type="ORF">V1</name>
</gene>
<comment type="function">
    <text evidence="1">Encapsidates the viral genome into characteristic twinned ('geminate') particles. Binds the genomic viral ssDNA and shuttles it into and out of the cell nucleus. Plays a role in protection of the genome from degradation, virus acquisition and transmission by insect vectors, infectivity, and systemic movement. The CP of monopartite geminiviruses is absolutely essential for virus movement (By similarity).</text>
</comment>
<comment type="subunit">
    <text evidence="1">Homomultimer. Interacts with the movement protein. Binds to single-stranded and double-stranded viral DNA (By similarity).</text>
</comment>
<comment type="subcellular location">
    <subcellularLocation>
        <location evidence="1">Virion</location>
    </subcellularLocation>
    <subcellularLocation>
        <location>Host nucleus</location>
    </subcellularLocation>
    <text evidence="1">It is actively transported into the host cell nucleus. It may be exported out of the nucleus through a nuclear export signal for cell-to-cell movement and spread (By similarity).</text>
</comment>
<comment type="similarity">
    <text evidence="2">Belongs to the geminiviridae capsid protein family.</text>
</comment>
<organismHost>
    <name type="scientific">Datura stramonium</name>
    <name type="common">Jimsonweed</name>
    <name type="synonym">Common thornapple</name>
    <dbReference type="NCBI Taxonomy" id="4076"/>
</organismHost>
<organismHost>
    <name type="scientific">Datura stramonium var. tatula</name>
    <dbReference type="NCBI Taxonomy" id="239686"/>
</organismHost>
<organismHost>
    <name type="scientific">Nicotiana tabacum</name>
    <name type="common">Common tobacco</name>
    <dbReference type="NCBI Taxonomy" id="4097"/>
</organismHost>
<organismHost>
    <name type="scientific">Solanum lycopersicum</name>
    <name type="common">Tomato</name>
    <name type="synonym">Lycopersicon esculentum</name>
    <dbReference type="NCBI Taxonomy" id="4081"/>
</organismHost>
<accession>P31616</accession>
<sequence>MAGRYKGLVYSRKRGRYGKTYQALGVKSQRELEQLVNQPGRPVSNRRPALQVAEYLWTTNKTGMTFSPGGSTFLITNFPQGANENCRHTNRTITYKMAVKTWVALDGSMFSRVSKFPIYFWLVYDKNPGESNPSPSAIFDSLYQDQPGTWTVTRNVCHRFVVKKTWSCMLESNGVDPNAKQGSSYYGPGPCYQWRHVTKFFKRLGVSTEWKNSSTGDVADIKEGALYLVCAPGGGATVRVGGRFRMYFKSVGNQ</sequence>
<proteinExistence type="inferred from homology"/>
<dbReference type="EMBL" id="M81103">
    <property type="protein sequence ID" value="AAA47948.1"/>
    <property type="molecule type" value="Genomic_DNA"/>
</dbReference>
<dbReference type="PIR" id="B42452">
    <property type="entry name" value="VCCVTY"/>
</dbReference>
<dbReference type="SMR" id="P31616"/>
<dbReference type="KEGG" id="vg:944387"/>
<dbReference type="Proteomes" id="UP000007548">
    <property type="component" value="Segment"/>
</dbReference>
<dbReference type="GO" id="GO:0043657">
    <property type="term" value="C:host cell"/>
    <property type="evidence" value="ECO:0007669"/>
    <property type="project" value="GOC"/>
</dbReference>
<dbReference type="GO" id="GO:0042025">
    <property type="term" value="C:host cell nucleus"/>
    <property type="evidence" value="ECO:0007669"/>
    <property type="project" value="UniProtKB-SubCell"/>
</dbReference>
<dbReference type="GO" id="GO:0039615">
    <property type="term" value="C:T=1 icosahedral viral capsid"/>
    <property type="evidence" value="ECO:0007669"/>
    <property type="project" value="UniProtKB-KW"/>
</dbReference>
<dbReference type="GO" id="GO:0003677">
    <property type="term" value="F:DNA binding"/>
    <property type="evidence" value="ECO:0007669"/>
    <property type="project" value="UniProtKB-KW"/>
</dbReference>
<dbReference type="GO" id="GO:0005198">
    <property type="term" value="F:structural molecule activity"/>
    <property type="evidence" value="ECO:0007669"/>
    <property type="project" value="InterPro"/>
</dbReference>
<dbReference type="GO" id="GO:0046718">
    <property type="term" value="P:symbiont entry into host cell"/>
    <property type="evidence" value="ECO:0007669"/>
    <property type="project" value="UniProtKB-KW"/>
</dbReference>
<dbReference type="GO" id="GO:0075732">
    <property type="term" value="P:viral penetration into host nucleus"/>
    <property type="evidence" value="ECO:0007669"/>
    <property type="project" value="UniProtKB-KW"/>
</dbReference>
<dbReference type="Gene3D" id="2.60.120.20">
    <property type="match status" value="1"/>
</dbReference>
<dbReference type="InterPro" id="IPR000143">
    <property type="entry name" value="Gemcoat_MSV"/>
</dbReference>
<dbReference type="InterPro" id="IPR000263">
    <property type="entry name" value="GV_A/BR1_coat"/>
</dbReference>
<dbReference type="InterPro" id="IPR029053">
    <property type="entry name" value="Viral_coat"/>
</dbReference>
<dbReference type="Pfam" id="PF00844">
    <property type="entry name" value="Gemini_coat"/>
    <property type="match status" value="1"/>
</dbReference>
<dbReference type="PRINTS" id="PR00223">
    <property type="entry name" value="GEMCOATARBR1"/>
</dbReference>
<dbReference type="PRINTS" id="PR00226">
    <property type="entry name" value="GEMCOATMSV"/>
</dbReference>
<evidence type="ECO:0000250" key="1"/>
<evidence type="ECO:0000305" key="2"/>